<accession>Q24UA2</accession>
<proteinExistence type="inferred from homology"/>
<feature type="chain" id="PRO_0000312453" description="5-methylthioadenosine/S-adenosylhomocysteine deaminase">
    <location>
        <begin position="1"/>
        <end position="431"/>
    </location>
</feature>
<feature type="binding site" evidence="1">
    <location>
        <position position="66"/>
    </location>
    <ligand>
        <name>Zn(2+)</name>
        <dbReference type="ChEBI" id="CHEBI:29105"/>
    </ligand>
</feature>
<feature type="binding site" evidence="1">
    <location>
        <position position="68"/>
    </location>
    <ligand>
        <name>Zn(2+)</name>
        <dbReference type="ChEBI" id="CHEBI:29105"/>
    </ligand>
</feature>
<feature type="binding site" evidence="1">
    <location>
        <position position="95"/>
    </location>
    <ligand>
        <name>substrate</name>
    </ligand>
</feature>
<feature type="binding site" evidence="1">
    <location>
        <position position="147"/>
    </location>
    <ligand>
        <name>substrate</name>
    </ligand>
</feature>
<feature type="binding site" evidence="1">
    <location>
        <position position="185"/>
    </location>
    <ligand>
        <name>substrate</name>
    </ligand>
</feature>
<feature type="binding site" evidence="1">
    <location>
        <position position="212"/>
    </location>
    <ligand>
        <name>Zn(2+)</name>
        <dbReference type="ChEBI" id="CHEBI:29105"/>
    </ligand>
</feature>
<feature type="binding site" evidence="1">
    <location>
        <position position="215"/>
    </location>
    <ligand>
        <name>substrate</name>
    </ligand>
</feature>
<feature type="binding site" evidence="1">
    <location>
        <position position="300"/>
    </location>
    <ligand>
        <name>substrate</name>
    </ligand>
</feature>
<feature type="binding site" evidence="1">
    <location>
        <position position="300"/>
    </location>
    <ligand>
        <name>Zn(2+)</name>
        <dbReference type="ChEBI" id="CHEBI:29105"/>
    </ligand>
</feature>
<dbReference type="EC" id="3.5.4.28" evidence="1"/>
<dbReference type="EC" id="3.5.4.31" evidence="1"/>
<dbReference type="EMBL" id="AP008230">
    <property type="protein sequence ID" value="BAE84390.1"/>
    <property type="molecule type" value="Genomic_DNA"/>
</dbReference>
<dbReference type="RefSeq" id="WP_011460449.1">
    <property type="nucleotide sequence ID" value="NC_007907.1"/>
</dbReference>
<dbReference type="SMR" id="Q24UA2"/>
<dbReference type="STRING" id="138119.DSY2601"/>
<dbReference type="KEGG" id="dsy:DSY2601"/>
<dbReference type="eggNOG" id="COG0402">
    <property type="taxonomic scope" value="Bacteria"/>
</dbReference>
<dbReference type="HOGENOM" id="CLU_012358_2_1_9"/>
<dbReference type="Proteomes" id="UP000001946">
    <property type="component" value="Chromosome"/>
</dbReference>
<dbReference type="GO" id="GO:0090614">
    <property type="term" value="F:5'-methylthioadenosine deaminase activity"/>
    <property type="evidence" value="ECO:0007669"/>
    <property type="project" value="UniProtKB-UniRule"/>
</dbReference>
<dbReference type="GO" id="GO:0046872">
    <property type="term" value="F:metal ion binding"/>
    <property type="evidence" value="ECO:0007669"/>
    <property type="project" value="UniProtKB-KW"/>
</dbReference>
<dbReference type="GO" id="GO:0050270">
    <property type="term" value="F:S-adenosylhomocysteine deaminase activity"/>
    <property type="evidence" value="ECO:0007669"/>
    <property type="project" value="UniProtKB-UniRule"/>
</dbReference>
<dbReference type="CDD" id="cd01298">
    <property type="entry name" value="ATZ_TRZ_like"/>
    <property type="match status" value="1"/>
</dbReference>
<dbReference type="FunFam" id="3.20.20.140:FF:000014">
    <property type="entry name" value="5-methylthioadenosine/S-adenosylhomocysteine deaminase"/>
    <property type="match status" value="1"/>
</dbReference>
<dbReference type="Gene3D" id="3.20.20.140">
    <property type="entry name" value="Metal-dependent hydrolases"/>
    <property type="match status" value="1"/>
</dbReference>
<dbReference type="Gene3D" id="2.30.40.10">
    <property type="entry name" value="Urease, subunit C, domain 1"/>
    <property type="match status" value="1"/>
</dbReference>
<dbReference type="HAMAP" id="MF_01281">
    <property type="entry name" value="MTA_SAH_deamin"/>
    <property type="match status" value="1"/>
</dbReference>
<dbReference type="InterPro" id="IPR006680">
    <property type="entry name" value="Amidohydro-rel"/>
</dbReference>
<dbReference type="InterPro" id="IPR023512">
    <property type="entry name" value="Deaminase_MtaD/DadD"/>
</dbReference>
<dbReference type="InterPro" id="IPR011059">
    <property type="entry name" value="Metal-dep_hydrolase_composite"/>
</dbReference>
<dbReference type="InterPro" id="IPR032466">
    <property type="entry name" value="Metal_Hydrolase"/>
</dbReference>
<dbReference type="InterPro" id="IPR050287">
    <property type="entry name" value="MTA/SAH_deaminase"/>
</dbReference>
<dbReference type="PANTHER" id="PTHR43794:SF11">
    <property type="entry name" value="AMIDOHYDROLASE-RELATED DOMAIN-CONTAINING PROTEIN"/>
    <property type="match status" value="1"/>
</dbReference>
<dbReference type="PANTHER" id="PTHR43794">
    <property type="entry name" value="AMINOHYDROLASE SSNA-RELATED"/>
    <property type="match status" value="1"/>
</dbReference>
<dbReference type="Pfam" id="PF01979">
    <property type="entry name" value="Amidohydro_1"/>
    <property type="match status" value="1"/>
</dbReference>
<dbReference type="SUPFAM" id="SSF51338">
    <property type="entry name" value="Composite domain of metallo-dependent hydrolases"/>
    <property type="match status" value="1"/>
</dbReference>
<dbReference type="SUPFAM" id="SSF51556">
    <property type="entry name" value="Metallo-dependent hydrolases"/>
    <property type="match status" value="1"/>
</dbReference>
<sequence length="431" mass="47440">MSKILIRAMVLPMTGPEDFYPEGEIGIENDRILFVGEKGSAPDSFIPDQIIDLPEDVVMPGLINTHTHAAMTMLRSYADDLPLMPWLQTKIWPFEDKMSDEDIYWGTLLALGEMIQSGTTTMLDMYASMDQVAKAVLEAGTRGVLSRGLIGNAPNGERAFAENIDLVKNYHGAGQGRIQVMFGPHAPYTCSGEFLQRVKQEADRLGVGIHIHVAETEDEIKTIKEQYGKTPVQWLEELGLFGGHVVAAHCVHLTEEDQEIMAQNKVFIAHNPESNMKLNSGTAPIPELRSRGVVVGLGTDGTSSNNNLDMFGEMRSAAFQQKLVKGATALPAYEVLQMATVDGARTLGLHDVGVLAPGYKADLISINFDQPHFYPRFSIPAHLVYVAHAGDVRTVMVDGKILMQERQLMTIDIKRVCREVEKRAKGIAQGL</sequence>
<gene>
    <name evidence="1" type="primary">mtaD</name>
    <name type="ordered locus">DSY2601</name>
</gene>
<organism>
    <name type="scientific">Desulfitobacterium hafniense (strain Y51)</name>
    <dbReference type="NCBI Taxonomy" id="138119"/>
    <lineage>
        <taxon>Bacteria</taxon>
        <taxon>Bacillati</taxon>
        <taxon>Bacillota</taxon>
        <taxon>Clostridia</taxon>
        <taxon>Eubacteriales</taxon>
        <taxon>Desulfitobacteriaceae</taxon>
        <taxon>Desulfitobacterium</taxon>
    </lineage>
</organism>
<name>MTAD_DESHY</name>
<protein>
    <recommendedName>
        <fullName evidence="1">5-methylthioadenosine/S-adenosylhomocysteine deaminase</fullName>
        <shortName evidence="1">MTA/SAH deaminase</shortName>
        <ecNumber evidence="1">3.5.4.28</ecNumber>
        <ecNumber evidence="1">3.5.4.31</ecNumber>
    </recommendedName>
</protein>
<evidence type="ECO:0000255" key="1">
    <source>
        <dbReference type="HAMAP-Rule" id="MF_01281"/>
    </source>
</evidence>
<reference key="1">
    <citation type="journal article" date="2006" name="J. Bacteriol.">
        <title>Complete genome sequence of the dehalorespiring bacterium Desulfitobacterium hafniense Y51 and comparison with Dehalococcoides ethenogenes 195.</title>
        <authorList>
            <person name="Nonaka H."/>
            <person name="Keresztes G."/>
            <person name="Shinoda Y."/>
            <person name="Ikenaga Y."/>
            <person name="Abe M."/>
            <person name="Naito K."/>
            <person name="Inatomi K."/>
            <person name="Furukawa K."/>
            <person name="Inui M."/>
            <person name="Yukawa H."/>
        </authorList>
    </citation>
    <scope>NUCLEOTIDE SEQUENCE [LARGE SCALE GENOMIC DNA]</scope>
    <source>
        <strain>Y51</strain>
    </source>
</reference>
<comment type="function">
    <text evidence="1">Catalyzes the deamination of 5-methylthioadenosine and S-adenosyl-L-homocysteine into 5-methylthioinosine and S-inosyl-L-homocysteine, respectively. Is also able to deaminate adenosine.</text>
</comment>
<comment type="catalytic activity">
    <reaction evidence="1">
        <text>S-adenosyl-L-homocysteine + H2O + H(+) = S-inosyl-L-homocysteine + NH4(+)</text>
        <dbReference type="Rhea" id="RHEA:20716"/>
        <dbReference type="ChEBI" id="CHEBI:15377"/>
        <dbReference type="ChEBI" id="CHEBI:15378"/>
        <dbReference type="ChEBI" id="CHEBI:28938"/>
        <dbReference type="ChEBI" id="CHEBI:57856"/>
        <dbReference type="ChEBI" id="CHEBI:57985"/>
        <dbReference type="EC" id="3.5.4.28"/>
    </reaction>
</comment>
<comment type="catalytic activity">
    <reaction evidence="1">
        <text>S-methyl-5'-thioadenosine + H2O + H(+) = S-methyl-5'-thioinosine + NH4(+)</text>
        <dbReference type="Rhea" id="RHEA:25025"/>
        <dbReference type="ChEBI" id="CHEBI:15377"/>
        <dbReference type="ChEBI" id="CHEBI:15378"/>
        <dbReference type="ChEBI" id="CHEBI:17509"/>
        <dbReference type="ChEBI" id="CHEBI:28938"/>
        <dbReference type="ChEBI" id="CHEBI:48595"/>
        <dbReference type="EC" id="3.5.4.31"/>
    </reaction>
</comment>
<comment type="cofactor">
    <cofactor evidence="1">
        <name>Zn(2+)</name>
        <dbReference type="ChEBI" id="CHEBI:29105"/>
    </cofactor>
    <text evidence="1">Binds 1 zinc ion per subunit.</text>
</comment>
<comment type="similarity">
    <text evidence="1">Belongs to the metallo-dependent hydrolases superfamily. MTA/SAH deaminase family.</text>
</comment>
<keyword id="KW-0378">Hydrolase</keyword>
<keyword id="KW-0479">Metal-binding</keyword>
<keyword id="KW-1185">Reference proteome</keyword>
<keyword id="KW-0862">Zinc</keyword>